<name>NDUB5_MACFA</name>
<dbReference type="EMBL" id="AB178974">
    <property type="protein sequence ID" value="BAE02025.1"/>
    <property type="molecule type" value="mRNA"/>
</dbReference>
<dbReference type="RefSeq" id="NP_001270530.1">
    <property type="nucleotide sequence ID" value="NM_001283601.1"/>
</dbReference>
<dbReference type="RefSeq" id="XP_045242532.1">
    <property type="nucleotide sequence ID" value="XM_045386597.2"/>
</dbReference>
<dbReference type="SMR" id="Q4R4E0"/>
<dbReference type="STRING" id="9541.ENSMFAP00000030028"/>
<dbReference type="Ensembl" id="ENSMFAT00000004233.2">
    <property type="protein sequence ID" value="ENSMFAP00000030028.1"/>
    <property type="gene ID" value="ENSMFAG00000042220.2"/>
</dbReference>
<dbReference type="GeneID" id="101866824"/>
<dbReference type="VEuPathDB" id="HostDB:ENSMFAG00000042220"/>
<dbReference type="eggNOG" id="KOG4632">
    <property type="taxonomic scope" value="Eukaryota"/>
</dbReference>
<dbReference type="GeneTree" id="ENSGT00390000009980"/>
<dbReference type="OMA" id="HHHMTIK"/>
<dbReference type="Proteomes" id="UP000233100">
    <property type="component" value="Chromosome 2"/>
</dbReference>
<dbReference type="Bgee" id="ENSMFAG00000042220">
    <property type="expression patterns" value="Expressed in heart and 13 other cell types or tissues"/>
</dbReference>
<dbReference type="GO" id="GO:0005743">
    <property type="term" value="C:mitochondrial inner membrane"/>
    <property type="evidence" value="ECO:0007669"/>
    <property type="project" value="UniProtKB-SubCell"/>
</dbReference>
<dbReference type="GO" id="GO:0005654">
    <property type="term" value="C:nucleoplasm"/>
    <property type="evidence" value="ECO:0007669"/>
    <property type="project" value="Ensembl"/>
</dbReference>
<dbReference type="GO" id="GO:0045271">
    <property type="term" value="C:respiratory chain complex I"/>
    <property type="evidence" value="ECO:0000250"/>
    <property type="project" value="UniProtKB"/>
</dbReference>
<dbReference type="InterPro" id="IPR019173">
    <property type="entry name" value="NADH_UbQ_OxRdtase_B5_su"/>
</dbReference>
<dbReference type="PANTHER" id="PTHR13178:SF0">
    <property type="entry name" value="NADH DEHYDROGENASE [UBIQUINONE] 1 BETA SUBCOMPLEX SUBUNIT 5, MITOCHONDRIAL"/>
    <property type="match status" value="1"/>
</dbReference>
<dbReference type="PANTHER" id="PTHR13178">
    <property type="entry name" value="NADH-UBIQUINONE OXIDOREDUCTASE SGDH SUBUNIT"/>
    <property type="match status" value="1"/>
</dbReference>
<dbReference type="Pfam" id="PF09781">
    <property type="entry name" value="NDUF_B5"/>
    <property type="match status" value="1"/>
</dbReference>
<reference key="1">
    <citation type="submission" date="2005-06" db="EMBL/GenBank/DDBJ databases">
        <title>DNA sequences of macaque genes expressed in brain or testis and its evolutionary implications.</title>
        <authorList>
            <consortium name="International consortium for macaque cDNA sequencing and analysis"/>
        </authorList>
    </citation>
    <scope>NUCLEOTIDE SEQUENCE [LARGE SCALE MRNA]</scope>
    <source>
        <tissue>Testis</tissue>
    </source>
</reference>
<protein>
    <recommendedName>
        <fullName>NADH dehydrogenase [ubiquinone] 1 beta subcomplex subunit 5, mitochondrial</fullName>
    </recommendedName>
    <alternativeName>
        <fullName>Complex I-SGDH</fullName>
        <shortName>CI-SGDH</shortName>
    </alternativeName>
    <alternativeName>
        <fullName>NADH-ubiquinone oxidoreductase SGDH subunit</fullName>
    </alternativeName>
</protein>
<feature type="transit peptide" description="Mitochondrion" evidence="1">
    <location>
        <begin position="1"/>
        <end position="46"/>
    </location>
</feature>
<feature type="chain" id="PRO_0000233983" description="NADH dehydrogenase [ubiquinone] 1 beta subcomplex subunit 5, mitochondrial">
    <location>
        <begin position="47"/>
        <end position="189"/>
    </location>
</feature>
<feature type="transmembrane region" description="Helical" evidence="3">
    <location>
        <begin position="73"/>
        <end position="93"/>
    </location>
</feature>
<sequence length="189" mass="21685">MAGMSLLRRVSVTAVAALSGRSLGTRLGFGGFLTRGFPKAVAPVRHSGGHGKRLFVIKPSRFYDIRFLKLLRFYIALTGIPVVIIITLVNVFIGEAELAEIPEGYIPEHWEYYKHPISRWIARNFYDSPEKIYEKSMAVLQIEAEKAELRLKELEVRRLMRMRGDGPWYYYETIDKELIDHSPKATPDN</sequence>
<evidence type="ECO:0000250" key="1"/>
<evidence type="ECO:0000250" key="2">
    <source>
        <dbReference type="UniProtKB" id="O43674"/>
    </source>
</evidence>
<evidence type="ECO:0000255" key="3"/>
<evidence type="ECO:0000305" key="4"/>
<organism>
    <name type="scientific">Macaca fascicularis</name>
    <name type="common">Crab-eating macaque</name>
    <name type="synonym">Cynomolgus monkey</name>
    <dbReference type="NCBI Taxonomy" id="9541"/>
    <lineage>
        <taxon>Eukaryota</taxon>
        <taxon>Metazoa</taxon>
        <taxon>Chordata</taxon>
        <taxon>Craniata</taxon>
        <taxon>Vertebrata</taxon>
        <taxon>Euteleostomi</taxon>
        <taxon>Mammalia</taxon>
        <taxon>Eutheria</taxon>
        <taxon>Euarchontoglires</taxon>
        <taxon>Primates</taxon>
        <taxon>Haplorrhini</taxon>
        <taxon>Catarrhini</taxon>
        <taxon>Cercopithecidae</taxon>
        <taxon>Cercopithecinae</taxon>
        <taxon>Macaca</taxon>
    </lineage>
</organism>
<keyword id="KW-0249">Electron transport</keyword>
<keyword id="KW-0472">Membrane</keyword>
<keyword id="KW-0496">Mitochondrion</keyword>
<keyword id="KW-0999">Mitochondrion inner membrane</keyword>
<keyword id="KW-1185">Reference proteome</keyword>
<keyword id="KW-0679">Respiratory chain</keyword>
<keyword id="KW-0809">Transit peptide</keyword>
<keyword id="KW-0812">Transmembrane</keyword>
<keyword id="KW-1133">Transmembrane helix</keyword>
<keyword id="KW-0813">Transport</keyword>
<gene>
    <name type="primary">NDUFB5</name>
    <name type="ORF">QtsA-10659</name>
</gene>
<comment type="function">
    <text evidence="2">Accessory subunit of the mitochondrial membrane respiratory chain NADH dehydrogenase (Complex I), that is believed not to be involved in catalysis. Complex I functions in the transfer of electrons from NADH to the respiratory chain. The immediate electron acceptor for the enzyme is believed to be ubiquinone.</text>
</comment>
<comment type="subunit">
    <text evidence="2">Complex I is composed of 45 different subunits.</text>
</comment>
<comment type="subcellular location">
    <subcellularLocation>
        <location evidence="2">Mitochondrion inner membrane</location>
        <topology evidence="2">Single-pass membrane protein</topology>
        <orientation evidence="2">Matrix side</orientation>
    </subcellularLocation>
</comment>
<comment type="similarity">
    <text evidence="4">Belongs to the complex I NDUFB5 subunit family.</text>
</comment>
<accession>Q4R4E0</accession>
<proteinExistence type="evidence at transcript level"/>